<reference key="1">
    <citation type="journal article" date="2007" name="PLoS ONE">
        <title>Analysis of the neurotoxin complex genes in Clostridium botulinum A1-A4 and B1 strains: BoNT/A3, /Ba4 and /B1 clusters are located within plasmids.</title>
        <authorList>
            <person name="Smith T.J."/>
            <person name="Hill K.K."/>
            <person name="Foley B.T."/>
            <person name="Detter J.C."/>
            <person name="Munk A.C."/>
            <person name="Bruce D.C."/>
            <person name="Doggett N.A."/>
            <person name="Smith L.A."/>
            <person name="Marks J.D."/>
            <person name="Xie G."/>
            <person name="Brettin T.S."/>
        </authorList>
    </citation>
    <scope>NUCLEOTIDE SEQUENCE [LARGE SCALE GENOMIC DNA]</scope>
    <source>
        <strain>Okra / Type B1</strain>
    </source>
</reference>
<gene>
    <name evidence="1" type="primary">glyA</name>
    <name type="ordered locus">CLD_1970</name>
</gene>
<name>GLYA_CLOBK</name>
<feature type="chain" id="PRO_1000091531" description="Serine hydroxymethyltransferase">
    <location>
        <begin position="1"/>
        <end position="413"/>
    </location>
</feature>
<feature type="binding site" evidence="1">
    <location>
        <position position="119"/>
    </location>
    <ligand>
        <name>(6S)-5,6,7,8-tetrahydrofolate</name>
        <dbReference type="ChEBI" id="CHEBI:57453"/>
    </ligand>
</feature>
<feature type="binding site" evidence="1">
    <location>
        <begin position="123"/>
        <end position="125"/>
    </location>
    <ligand>
        <name>(6S)-5,6,7,8-tetrahydrofolate</name>
        <dbReference type="ChEBI" id="CHEBI:57453"/>
    </ligand>
</feature>
<feature type="binding site" evidence="1">
    <location>
        <begin position="351"/>
        <end position="353"/>
    </location>
    <ligand>
        <name>(6S)-5,6,7,8-tetrahydrofolate</name>
        <dbReference type="ChEBI" id="CHEBI:57453"/>
    </ligand>
</feature>
<feature type="site" description="Plays an important role in substrate specificity" evidence="1">
    <location>
        <position position="227"/>
    </location>
</feature>
<feature type="modified residue" description="N6-(pyridoxal phosphate)lysine" evidence="1">
    <location>
        <position position="228"/>
    </location>
</feature>
<comment type="function">
    <text evidence="1">Catalyzes the reversible interconversion of serine and glycine with tetrahydrofolate (THF) serving as the one-carbon carrier. This reaction serves as the major source of one-carbon groups required for the biosynthesis of purines, thymidylate, methionine, and other important biomolecules. Also exhibits THF-independent aldolase activity toward beta-hydroxyamino acids, producing glycine and aldehydes, via a retro-aldol mechanism.</text>
</comment>
<comment type="catalytic activity">
    <reaction evidence="1">
        <text>(6R)-5,10-methylene-5,6,7,8-tetrahydrofolate + glycine + H2O = (6S)-5,6,7,8-tetrahydrofolate + L-serine</text>
        <dbReference type="Rhea" id="RHEA:15481"/>
        <dbReference type="ChEBI" id="CHEBI:15377"/>
        <dbReference type="ChEBI" id="CHEBI:15636"/>
        <dbReference type="ChEBI" id="CHEBI:33384"/>
        <dbReference type="ChEBI" id="CHEBI:57305"/>
        <dbReference type="ChEBI" id="CHEBI:57453"/>
        <dbReference type="EC" id="2.1.2.1"/>
    </reaction>
</comment>
<comment type="cofactor">
    <cofactor evidence="1">
        <name>pyridoxal 5'-phosphate</name>
        <dbReference type="ChEBI" id="CHEBI:597326"/>
    </cofactor>
</comment>
<comment type="pathway">
    <text evidence="1">One-carbon metabolism; tetrahydrofolate interconversion.</text>
</comment>
<comment type="pathway">
    <text evidence="1">Amino-acid biosynthesis; glycine biosynthesis; glycine from L-serine: step 1/1.</text>
</comment>
<comment type="subunit">
    <text evidence="1">Homodimer.</text>
</comment>
<comment type="subcellular location">
    <subcellularLocation>
        <location evidence="1">Cytoplasm</location>
    </subcellularLocation>
</comment>
<comment type="similarity">
    <text evidence="1">Belongs to the SHMT family.</text>
</comment>
<protein>
    <recommendedName>
        <fullName evidence="1">Serine hydroxymethyltransferase</fullName>
        <shortName evidence="1">SHMT</shortName>
        <shortName evidence="1">Serine methylase</shortName>
        <ecNumber evidence="1">2.1.2.1</ecNumber>
    </recommendedName>
</protein>
<accession>B1IJJ8</accession>
<organism>
    <name type="scientific">Clostridium botulinum (strain Okra / Type B1)</name>
    <dbReference type="NCBI Taxonomy" id="498213"/>
    <lineage>
        <taxon>Bacteria</taxon>
        <taxon>Bacillati</taxon>
        <taxon>Bacillota</taxon>
        <taxon>Clostridia</taxon>
        <taxon>Eubacteriales</taxon>
        <taxon>Clostridiaceae</taxon>
        <taxon>Clostridium</taxon>
    </lineage>
</organism>
<evidence type="ECO:0000255" key="1">
    <source>
        <dbReference type="HAMAP-Rule" id="MF_00051"/>
    </source>
</evidence>
<proteinExistence type="inferred from homology"/>
<keyword id="KW-0028">Amino-acid biosynthesis</keyword>
<keyword id="KW-0963">Cytoplasm</keyword>
<keyword id="KW-0554">One-carbon metabolism</keyword>
<keyword id="KW-0663">Pyridoxal phosphate</keyword>
<keyword id="KW-0808">Transferase</keyword>
<sequence length="413" mass="46327">MDFTNLKNTDPELLDMIKKEEERQEYNIELIASENFTSLSVMEAMGSLLTNKYAEGYPHKRYYGGCEFVDEVEDLARERLKKLFVAEHANVQPHSGSQANMAVYMSVLQTGDTILGMDLSHGGHLTHGSPVNFSGKLYNFISYGVDKETETIDYDQLKKIALENRPKMIVSGASAYPRIIDFEKIREICDEIDAYMMVDMAHIAGLVATGIHPSPVPYADFVTTTTHKTLRGPRGGAILCKEKYAKAVDKAIFPGIQGGPLMHTIAAKAVCFGEALREDYKEYMQQVVKNTKVLGEELKNYGFRLISGGTDNHLLLIDLTNKNITGKDAEKLLDSVGITVNKNTIPFETLSPFITSGIRIGTPAVTTRGFKEEEMKKIAYFMNYSIEHREENLSQIKEQIKEICKKYPLHQNA</sequence>
<dbReference type="EC" id="2.1.2.1" evidence="1"/>
<dbReference type="EMBL" id="CP000939">
    <property type="protein sequence ID" value="ACA44798.1"/>
    <property type="molecule type" value="Genomic_DNA"/>
</dbReference>
<dbReference type="RefSeq" id="WP_015957725.1">
    <property type="nucleotide sequence ID" value="NC_010516.1"/>
</dbReference>
<dbReference type="SMR" id="B1IJJ8"/>
<dbReference type="KEGG" id="cbb:CLD_1970"/>
<dbReference type="HOGENOM" id="CLU_022477_2_1_9"/>
<dbReference type="UniPathway" id="UPA00193"/>
<dbReference type="UniPathway" id="UPA00288">
    <property type="reaction ID" value="UER01023"/>
</dbReference>
<dbReference type="Proteomes" id="UP000008541">
    <property type="component" value="Chromosome"/>
</dbReference>
<dbReference type="GO" id="GO:0005829">
    <property type="term" value="C:cytosol"/>
    <property type="evidence" value="ECO:0007669"/>
    <property type="project" value="TreeGrafter"/>
</dbReference>
<dbReference type="GO" id="GO:0004372">
    <property type="term" value="F:glycine hydroxymethyltransferase activity"/>
    <property type="evidence" value="ECO:0007669"/>
    <property type="project" value="UniProtKB-UniRule"/>
</dbReference>
<dbReference type="GO" id="GO:0030170">
    <property type="term" value="F:pyridoxal phosphate binding"/>
    <property type="evidence" value="ECO:0007669"/>
    <property type="project" value="UniProtKB-UniRule"/>
</dbReference>
<dbReference type="GO" id="GO:0019264">
    <property type="term" value="P:glycine biosynthetic process from serine"/>
    <property type="evidence" value="ECO:0007669"/>
    <property type="project" value="UniProtKB-UniRule"/>
</dbReference>
<dbReference type="GO" id="GO:0035999">
    <property type="term" value="P:tetrahydrofolate interconversion"/>
    <property type="evidence" value="ECO:0007669"/>
    <property type="project" value="UniProtKB-UniRule"/>
</dbReference>
<dbReference type="CDD" id="cd00378">
    <property type="entry name" value="SHMT"/>
    <property type="match status" value="1"/>
</dbReference>
<dbReference type="FunFam" id="3.40.640.10:FF:000001">
    <property type="entry name" value="Serine hydroxymethyltransferase"/>
    <property type="match status" value="1"/>
</dbReference>
<dbReference type="FunFam" id="3.90.1150.10:FF:000003">
    <property type="entry name" value="Serine hydroxymethyltransferase"/>
    <property type="match status" value="1"/>
</dbReference>
<dbReference type="Gene3D" id="3.90.1150.10">
    <property type="entry name" value="Aspartate Aminotransferase, domain 1"/>
    <property type="match status" value="1"/>
</dbReference>
<dbReference type="Gene3D" id="3.40.640.10">
    <property type="entry name" value="Type I PLP-dependent aspartate aminotransferase-like (Major domain)"/>
    <property type="match status" value="1"/>
</dbReference>
<dbReference type="HAMAP" id="MF_00051">
    <property type="entry name" value="SHMT"/>
    <property type="match status" value="1"/>
</dbReference>
<dbReference type="InterPro" id="IPR015424">
    <property type="entry name" value="PyrdxlP-dep_Trfase"/>
</dbReference>
<dbReference type="InterPro" id="IPR015421">
    <property type="entry name" value="PyrdxlP-dep_Trfase_major"/>
</dbReference>
<dbReference type="InterPro" id="IPR015422">
    <property type="entry name" value="PyrdxlP-dep_Trfase_small"/>
</dbReference>
<dbReference type="InterPro" id="IPR001085">
    <property type="entry name" value="Ser_HO-MeTrfase"/>
</dbReference>
<dbReference type="InterPro" id="IPR049943">
    <property type="entry name" value="Ser_HO-MeTrfase-like"/>
</dbReference>
<dbReference type="InterPro" id="IPR019798">
    <property type="entry name" value="Ser_HO-MeTrfase_PLP_BS"/>
</dbReference>
<dbReference type="InterPro" id="IPR039429">
    <property type="entry name" value="SHMT-like_dom"/>
</dbReference>
<dbReference type="NCBIfam" id="NF000586">
    <property type="entry name" value="PRK00011.1"/>
    <property type="match status" value="1"/>
</dbReference>
<dbReference type="PANTHER" id="PTHR11680">
    <property type="entry name" value="SERINE HYDROXYMETHYLTRANSFERASE"/>
    <property type="match status" value="1"/>
</dbReference>
<dbReference type="PANTHER" id="PTHR11680:SF35">
    <property type="entry name" value="SERINE HYDROXYMETHYLTRANSFERASE 1"/>
    <property type="match status" value="1"/>
</dbReference>
<dbReference type="Pfam" id="PF00464">
    <property type="entry name" value="SHMT"/>
    <property type="match status" value="1"/>
</dbReference>
<dbReference type="PIRSF" id="PIRSF000412">
    <property type="entry name" value="SHMT"/>
    <property type="match status" value="1"/>
</dbReference>
<dbReference type="SUPFAM" id="SSF53383">
    <property type="entry name" value="PLP-dependent transferases"/>
    <property type="match status" value="1"/>
</dbReference>
<dbReference type="PROSITE" id="PS00096">
    <property type="entry name" value="SHMT"/>
    <property type="match status" value="1"/>
</dbReference>